<accession>Q182S6</accession>
<name>RPOZ_CLOD6</name>
<gene>
    <name evidence="1" type="primary">rpoZ</name>
    <name type="ordered locus">CD630_25871</name>
    <name type="ORF">CD2587A</name>
</gene>
<comment type="function">
    <text evidence="1">Promotes RNA polymerase assembly. Latches the N- and C-terminal regions of the beta' subunit thereby facilitating its interaction with the beta and alpha subunits.</text>
</comment>
<comment type="catalytic activity">
    <reaction evidence="1">
        <text>RNA(n) + a ribonucleoside 5'-triphosphate = RNA(n+1) + diphosphate</text>
        <dbReference type="Rhea" id="RHEA:21248"/>
        <dbReference type="Rhea" id="RHEA-COMP:14527"/>
        <dbReference type="Rhea" id="RHEA-COMP:17342"/>
        <dbReference type="ChEBI" id="CHEBI:33019"/>
        <dbReference type="ChEBI" id="CHEBI:61557"/>
        <dbReference type="ChEBI" id="CHEBI:140395"/>
        <dbReference type="EC" id="2.7.7.6"/>
    </reaction>
</comment>
<comment type="subunit">
    <text evidence="1">The RNAP catalytic core consists of 2 alpha, 1 beta, 1 beta' and 1 omega subunit. When a sigma factor is associated with the core the holoenzyme is formed, which can initiate transcription.</text>
</comment>
<comment type="similarity">
    <text evidence="1">Belongs to the RNA polymerase subunit omega family.</text>
</comment>
<feature type="chain" id="PRO_1000005914" description="DNA-directed RNA polymerase subunit omega">
    <location>
        <begin position="1"/>
        <end position="88"/>
    </location>
</feature>
<feature type="turn" evidence="2">
    <location>
        <begin position="6"/>
        <end position="12"/>
    </location>
</feature>
<feature type="helix" evidence="2">
    <location>
        <begin position="16"/>
        <end position="31"/>
    </location>
</feature>
<feature type="helix" evidence="2">
    <location>
        <begin position="46"/>
        <end position="56"/>
    </location>
</feature>
<feature type="helix" evidence="2">
    <location>
        <begin position="66"/>
        <end position="76"/>
    </location>
</feature>
<dbReference type="EC" id="2.7.7.6" evidence="1"/>
<dbReference type="EMBL" id="AM180355">
    <property type="protein sequence ID" value="CAJ69477.1"/>
    <property type="molecule type" value="Genomic_DNA"/>
</dbReference>
<dbReference type="RefSeq" id="WP_003431167.1">
    <property type="nucleotide sequence ID" value="NZ_JAUPES010000012.1"/>
</dbReference>
<dbReference type="RefSeq" id="YP_001089104.1">
    <property type="nucleotide sequence ID" value="NC_009089.1"/>
</dbReference>
<dbReference type="PDB" id="7L7B">
    <property type="method" value="EM"/>
    <property type="resolution" value="3.26 A"/>
    <property type="chains" value="E=1-88"/>
</dbReference>
<dbReference type="PDBsum" id="7L7B"/>
<dbReference type="EMDB" id="EMD-23210"/>
<dbReference type="SMR" id="Q182S6"/>
<dbReference type="STRING" id="272563.CD630_25871"/>
<dbReference type="ChEMBL" id="CHEMBL2363852"/>
<dbReference type="DrugCentral" id="Q182S6"/>
<dbReference type="EnsemblBacteria" id="CAJ69477">
    <property type="protein sequence ID" value="CAJ69477"/>
    <property type="gene ID" value="CD630_25871"/>
</dbReference>
<dbReference type="GeneID" id="66354988"/>
<dbReference type="KEGG" id="cdf:CD630_25871"/>
<dbReference type="KEGG" id="pdc:CDIF630_02841"/>
<dbReference type="PATRIC" id="fig|272563.120.peg.2729"/>
<dbReference type="eggNOG" id="COG1758">
    <property type="taxonomic scope" value="Bacteria"/>
</dbReference>
<dbReference type="OrthoDB" id="9815459at2"/>
<dbReference type="PhylomeDB" id="Q182S6"/>
<dbReference type="BioCyc" id="PDIF272563:G12WB-2744-MONOMER"/>
<dbReference type="PRO" id="PR:Q182S6"/>
<dbReference type="Proteomes" id="UP000001978">
    <property type="component" value="Chromosome"/>
</dbReference>
<dbReference type="GO" id="GO:0000428">
    <property type="term" value="C:DNA-directed RNA polymerase complex"/>
    <property type="evidence" value="ECO:0007669"/>
    <property type="project" value="UniProtKB-KW"/>
</dbReference>
<dbReference type="GO" id="GO:0003677">
    <property type="term" value="F:DNA binding"/>
    <property type="evidence" value="ECO:0007669"/>
    <property type="project" value="UniProtKB-UniRule"/>
</dbReference>
<dbReference type="GO" id="GO:0003899">
    <property type="term" value="F:DNA-directed RNA polymerase activity"/>
    <property type="evidence" value="ECO:0007669"/>
    <property type="project" value="UniProtKB-UniRule"/>
</dbReference>
<dbReference type="GO" id="GO:0006351">
    <property type="term" value="P:DNA-templated transcription"/>
    <property type="evidence" value="ECO:0007669"/>
    <property type="project" value="UniProtKB-UniRule"/>
</dbReference>
<dbReference type="Gene3D" id="3.90.940.10">
    <property type="match status" value="1"/>
</dbReference>
<dbReference type="HAMAP" id="MF_00366">
    <property type="entry name" value="RNApol_bact_RpoZ"/>
    <property type="match status" value="1"/>
</dbReference>
<dbReference type="InterPro" id="IPR003716">
    <property type="entry name" value="DNA-dir_RNA_pol_omega"/>
</dbReference>
<dbReference type="InterPro" id="IPR006110">
    <property type="entry name" value="Pol_omega/Rpo6/RPB6"/>
</dbReference>
<dbReference type="InterPro" id="IPR036161">
    <property type="entry name" value="RPB6/omega-like_sf"/>
</dbReference>
<dbReference type="NCBIfam" id="TIGR00690">
    <property type="entry name" value="rpoZ"/>
    <property type="match status" value="1"/>
</dbReference>
<dbReference type="PANTHER" id="PTHR34476">
    <property type="entry name" value="DNA-DIRECTED RNA POLYMERASE SUBUNIT OMEGA"/>
    <property type="match status" value="1"/>
</dbReference>
<dbReference type="PANTHER" id="PTHR34476:SF1">
    <property type="entry name" value="DNA-DIRECTED RNA POLYMERASE SUBUNIT OMEGA"/>
    <property type="match status" value="1"/>
</dbReference>
<dbReference type="Pfam" id="PF01192">
    <property type="entry name" value="RNA_pol_Rpb6"/>
    <property type="match status" value="1"/>
</dbReference>
<dbReference type="SMART" id="SM01409">
    <property type="entry name" value="RNA_pol_Rpb6"/>
    <property type="match status" value="1"/>
</dbReference>
<dbReference type="SUPFAM" id="SSF63562">
    <property type="entry name" value="RPB6/omega subunit-like"/>
    <property type="match status" value="1"/>
</dbReference>
<sequence>MLKPSINEVLEKIDNRYYLVGTVSKRARKLIDGEEPYVSNKTKEKPVCVATKEVASGKITYRLLTEEEIEIEEARHHAEQHQQISEEE</sequence>
<proteinExistence type="evidence at protein level"/>
<protein>
    <recommendedName>
        <fullName evidence="1">DNA-directed RNA polymerase subunit omega</fullName>
        <shortName evidence="1">RNAP omega subunit</shortName>
        <ecNumber evidence="1">2.7.7.6</ecNumber>
    </recommendedName>
    <alternativeName>
        <fullName evidence="1">RNA polymerase omega subunit</fullName>
    </alternativeName>
    <alternativeName>
        <fullName evidence="1">Transcriptase subunit omega</fullName>
    </alternativeName>
</protein>
<evidence type="ECO:0000255" key="1">
    <source>
        <dbReference type="HAMAP-Rule" id="MF_00366"/>
    </source>
</evidence>
<evidence type="ECO:0007829" key="2">
    <source>
        <dbReference type="PDB" id="7L7B"/>
    </source>
</evidence>
<organism>
    <name type="scientific">Clostridioides difficile (strain 630)</name>
    <name type="common">Peptoclostridium difficile</name>
    <dbReference type="NCBI Taxonomy" id="272563"/>
    <lineage>
        <taxon>Bacteria</taxon>
        <taxon>Bacillati</taxon>
        <taxon>Bacillota</taxon>
        <taxon>Clostridia</taxon>
        <taxon>Peptostreptococcales</taxon>
        <taxon>Peptostreptococcaceae</taxon>
        <taxon>Clostridioides</taxon>
    </lineage>
</organism>
<keyword id="KW-0002">3D-structure</keyword>
<keyword id="KW-0240">DNA-directed RNA polymerase</keyword>
<keyword id="KW-0548">Nucleotidyltransferase</keyword>
<keyword id="KW-1185">Reference proteome</keyword>
<keyword id="KW-0804">Transcription</keyword>
<keyword id="KW-0808">Transferase</keyword>
<reference key="1">
    <citation type="journal article" date="2006" name="Nat. Genet.">
        <title>The multidrug-resistant human pathogen Clostridium difficile has a highly mobile, mosaic genome.</title>
        <authorList>
            <person name="Sebaihia M."/>
            <person name="Wren B.W."/>
            <person name="Mullany P."/>
            <person name="Fairweather N.F."/>
            <person name="Minton N."/>
            <person name="Stabler R."/>
            <person name="Thomson N.R."/>
            <person name="Roberts A.P."/>
            <person name="Cerdeno-Tarraga A.M."/>
            <person name="Wang H."/>
            <person name="Holden M.T.G."/>
            <person name="Wright A."/>
            <person name="Churcher C."/>
            <person name="Quail M.A."/>
            <person name="Baker S."/>
            <person name="Bason N."/>
            <person name="Brooks K."/>
            <person name="Chillingworth T."/>
            <person name="Cronin A."/>
            <person name="Davis P."/>
            <person name="Dowd L."/>
            <person name="Fraser A."/>
            <person name="Feltwell T."/>
            <person name="Hance Z."/>
            <person name="Holroyd S."/>
            <person name="Jagels K."/>
            <person name="Moule S."/>
            <person name="Mungall K."/>
            <person name="Price C."/>
            <person name="Rabbinowitsch E."/>
            <person name="Sharp S."/>
            <person name="Simmonds M."/>
            <person name="Stevens K."/>
            <person name="Unwin L."/>
            <person name="Whithead S."/>
            <person name="Dupuy B."/>
            <person name="Dougan G."/>
            <person name="Barrell B."/>
            <person name="Parkhill J."/>
        </authorList>
    </citation>
    <scope>NUCLEOTIDE SEQUENCE [LARGE SCALE GENOMIC DNA]</scope>
    <source>
        <strain>630</strain>
    </source>
</reference>